<keyword id="KW-0012">Acyltransferase</keyword>
<keyword id="KW-1017">Isopeptide bond</keyword>
<keyword id="KW-1185">Reference proteome</keyword>
<keyword id="KW-0808">Transferase</keyword>
<keyword id="KW-0832">Ubl conjugation</keyword>
<name>FADA4_MYCS2</name>
<proteinExistence type="evidence at protein level"/>
<accession>A0R1Y7</accession>
<accession>I7GD60</accession>
<protein>
    <recommendedName>
        <fullName>Probable acetyl-CoA acetyltransferase</fullName>
        <ecNumber>2.3.1.9</ecNumber>
    </recommendedName>
    <alternativeName>
        <fullName>Acetoacetyl-CoA thiolase</fullName>
    </alternativeName>
</protein>
<evidence type="ECO:0000250" key="1"/>
<evidence type="ECO:0000255" key="2">
    <source>
        <dbReference type="PROSITE-ProRule" id="PRU10020"/>
    </source>
</evidence>
<evidence type="ECO:0000269" key="3">
    <source>
    </source>
</evidence>
<evidence type="ECO:0000305" key="4"/>
<gene>
    <name type="ordered locus">MSMEG_4920</name>
    <name type="ordered locus">MSMEI_4793</name>
</gene>
<comment type="catalytic activity">
    <reaction evidence="2">
        <text>2 acetyl-CoA = acetoacetyl-CoA + CoA</text>
        <dbReference type="Rhea" id="RHEA:21036"/>
        <dbReference type="ChEBI" id="CHEBI:57286"/>
        <dbReference type="ChEBI" id="CHEBI:57287"/>
        <dbReference type="ChEBI" id="CHEBI:57288"/>
        <dbReference type="EC" id="2.3.1.9"/>
    </reaction>
</comment>
<comment type="similarity">
    <text evidence="4">Belongs to the thiolase-like superfamily. Thiolase family.</text>
</comment>
<comment type="sequence caution" evidence="4">
    <conflict type="erroneous initiation">
        <sequence resource="EMBL-CDS" id="ABK71664"/>
    </conflict>
    <text>Extended N-terminus.</text>
</comment>
<comment type="sequence caution" evidence="4">
    <conflict type="erroneous initiation">
        <sequence resource="EMBL-CDS" id="AFP41241"/>
    </conflict>
    <text>Extended N-terminus.</text>
</comment>
<feature type="chain" id="PRO_0000396110" description="Probable acetyl-CoA acetyltransferase">
    <location>
        <begin position="1"/>
        <end position="388"/>
    </location>
</feature>
<feature type="active site" description="Acyl-thioester intermediate" evidence="1">
    <location>
        <position position="84"/>
    </location>
</feature>
<feature type="active site" description="Proton acceptor" evidence="2">
    <location>
        <position position="345"/>
    </location>
</feature>
<feature type="active site" description="Proton acceptor" evidence="2">
    <location>
        <position position="375"/>
    </location>
</feature>
<feature type="cross-link" description="Isoglutamyl lysine isopeptide (Lys-Gln) (interchain with Q-Cter in protein Pup)" evidence="3">
    <location>
        <position position="187"/>
    </location>
</feature>
<organism>
    <name type="scientific">Mycolicibacterium smegmatis (strain ATCC 700084 / mc(2)155)</name>
    <name type="common">Mycobacterium smegmatis</name>
    <dbReference type="NCBI Taxonomy" id="246196"/>
    <lineage>
        <taxon>Bacteria</taxon>
        <taxon>Bacillati</taxon>
        <taxon>Actinomycetota</taxon>
        <taxon>Actinomycetes</taxon>
        <taxon>Mycobacteriales</taxon>
        <taxon>Mycobacteriaceae</taxon>
        <taxon>Mycolicibacterium</taxon>
    </lineage>
</organism>
<reference key="1">
    <citation type="submission" date="2006-10" db="EMBL/GenBank/DDBJ databases">
        <authorList>
            <person name="Fleischmann R.D."/>
            <person name="Dodson R.J."/>
            <person name="Haft D.H."/>
            <person name="Merkel J.S."/>
            <person name="Nelson W.C."/>
            <person name="Fraser C.M."/>
        </authorList>
    </citation>
    <scope>NUCLEOTIDE SEQUENCE [LARGE SCALE GENOMIC DNA]</scope>
    <source>
        <strain>ATCC 700084 / mc(2)155</strain>
    </source>
</reference>
<reference key="2">
    <citation type="journal article" date="2007" name="Genome Biol.">
        <title>Interrupted coding sequences in Mycobacterium smegmatis: authentic mutations or sequencing errors?</title>
        <authorList>
            <person name="Deshayes C."/>
            <person name="Perrodou E."/>
            <person name="Gallien S."/>
            <person name="Euphrasie D."/>
            <person name="Schaeffer C."/>
            <person name="Van-Dorsselaer A."/>
            <person name="Poch O."/>
            <person name="Lecompte O."/>
            <person name="Reyrat J.-M."/>
        </authorList>
    </citation>
    <scope>NUCLEOTIDE SEQUENCE [LARGE SCALE GENOMIC DNA]</scope>
    <source>
        <strain>ATCC 700084 / mc(2)155</strain>
    </source>
</reference>
<reference key="3">
    <citation type="journal article" date="2009" name="Genome Res.">
        <title>Ortho-proteogenomics: multiple proteomes investigation through orthology and a new MS-based protocol.</title>
        <authorList>
            <person name="Gallien S."/>
            <person name="Perrodou E."/>
            <person name="Carapito C."/>
            <person name="Deshayes C."/>
            <person name="Reyrat J.-M."/>
            <person name="Van Dorsselaer A."/>
            <person name="Poch O."/>
            <person name="Schaeffer C."/>
            <person name="Lecompte O."/>
        </authorList>
    </citation>
    <scope>NUCLEOTIDE SEQUENCE [LARGE SCALE GENOMIC DNA]</scope>
    <source>
        <strain>ATCC 700084 / mc(2)155</strain>
    </source>
</reference>
<reference key="4">
    <citation type="journal article" date="2010" name="Mol. Biosyst.">
        <title>Expansion of the mycobacterial 'PUPylome'.</title>
        <authorList>
            <person name="Watrous J."/>
            <person name="Burns K."/>
            <person name="Liu W.T."/>
            <person name="Patel A."/>
            <person name="Hook V."/>
            <person name="Bafna V."/>
            <person name="Barry C.E. III"/>
            <person name="Bark S."/>
            <person name="Dorrestein P.C."/>
        </authorList>
    </citation>
    <scope>PUPYLATION AT LYS-187</scope>
    <scope>IDENTIFICATION BY MASS SPECTROMETRY</scope>
</reference>
<dbReference type="EC" id="2.3.1.9"/>
<dbReference type="EMBL" id="CP000480">
    <property type="protein sequence ID" value="ABK71664.1"/>
    <property type="status" value="ALT_INIT"/>
    <property type="molecule type" value="Genomic_DNA"/>
</dbReference>
<dbReference type="EMBL" id="CP001663">
    <property type="protein sequence ID" value="AFP41241.1"/>
    <property type="status" value="ALT_INIT"/>
    <property type="molecule type" value="Genomic_DNA"/>
</dbReference>
<dbReference type="RefSeq" id="YP_889175.1">
    <property type="nucleotide sequence ID" value="NC_008596.1"/>
</dbReference>
<dbReference type="SMR" id="A0R1Y7"/>
<dbReference type="STRING" id="246196.MSMEG_4920"/>
<dbReference type="PaxDb" id="246196-MSMEI_4793"/>
<dbReference type="KEGG" id="msg:MSMEI_4793"/>
<dbReference type="KEGG" id="msm:MSMEG_4920"/>
<dbReference type="PATRIC" id="fig|246196.19.peg.4801"/>
<dbReference type="eggNOG" id="COG0183">
    <property type="taxonomic scope" value="Bacteria"/>
</dbReference>
<dbReference type="OrthoDB" id="9764638at2"/>
<dbReference type="Proteomes" id="UP000000757">
    <property type="component" value="Chromosome"/>
</dbReference>
<dbReference type="Proteomes" id="UP000006158">
    <property type="component" value="Chromosome"/>
</dbReference>
<dbReference type="GO" id="GO:0003985">
    <property type="term" value="F:acetyl-CoA C-acetyltransferase activity"/>
    <property type="evidence" value="ECO:0007669"/>
    <property type="project" value="UniProtKB-EC"/>
</dbReference>
<dbReference type="CDD" id="cd00751">
    <property type="entry name" value="thiolase"/>
    <property type="match status" value="1"/>
</dbReference>
<dbReference type="FunFam" id="3.40.47.10:FF:000010">
    <property type="entry name" value="Acetyl-CoA acetyltransferase (Thiolase)"/>
    <property type="match status" value="1"/>
</dbReference>
<dbReference type="Gene3D" id="3.40.47.10">
    <property type="match status" value="2"/>
</dbReference>
<dbReference type="InterPro" id="IPR002155">
    <property type="entry name" value="Thiolase"/>
</dbReference>
<dbReference type="InterPro" id="IPR016039">
    <property type="entry name" value="Thiolase-like"/>
</dbReference>
<dbReference type="InterPro" id="IPR020615">
    <property type="entry name" value="Thiolase_acyl_enz_int_AS"/>
</dbReference>
<dbReference type="InterPro" id="IPR020610">
    <property type="entry name" value="Thiolase_AS"/>
</dbReference>
<dbReference type="InterPro" id="IPR020617">
    <property type="entry name" value="Thiolase_C"/>
</dbReference>
<dbReference type="InterPro" id="IPR020613">
    <property type="entry name" value="Thiolase_CS"/>
</dbReference>
<dbReference type="InterPro" id="IPR020616">
    <property type="entry name" value="Thiolase_N"/>
</dbReference>
<dbReference type="NCBIfam" id="TIGR01930">
    <property type="entry name" value="AcCoA-C-Actrans"/>
    <property type="match status" value="1"/>
</dbReference>
<dbReference type="PANTHER" id="PTHR18919:SF107">
    <property type="entry name" value="ACETYL-COA ACETYLTRANSFERASE, CYTOSOLIC"/>
    <property type="match status" value="1"/>
</dbReference>
<dbReference type="PANTHER" id="PTHR18919">
    <property type="entry name" value="ACETYL-COA C-ACYLTRANSFERASE"/>
    <property type="match status" value="1"/>
</dbReference>
<dbReference type="Pfam" id="PF02803">
    <property type="entry name" value="Thiolase_C"/>
    <property type="match status" value="1"/>
</dbReference>
<dbReference type="Pfam" id="PF00108">
    <property type="entry name" value="Thiolase_N"/>
    <property type="match status" value="1"/>
</dbReference>
<dbReference type="PIRSF" id="PIRSF000429">
    <property type="entry name" value="Ac-CoA_Ac_transf"/>
    <property type="match status" value="1"/>
</dbReference>
<dbReference type="SUPFAM" id="SSF53901">
    <property type="entry name" value="Thiolase-like"/>
    <property type="match status" value="2"/>
</dbReference>
<dbReference type="PROSITE" id="PS00098">
    <property type="entry name" value="THIOLASE_1"/>
    <property type="match status" value="1"/>
</dbReference>
<dbReference type="PROSITE" id="PS00737">
    <property type="entry name" value="THIOLASE_2"/>
    <property type="match status" value="1"/>
</dbReference>
<dbReference type="PROSITE" id="PS00099">
    <property type="entry name" value="THIOLASE_3"/>
    <property type="match status" value="1"/>
</dbReference>
<sequence>MIVAGARTPVGKLMGSLKDFSGTDLGAIAIRAALEKANVPASMVEYVIMGQVLTAGAGQMPARQAAVAAGIPWDVAALSINKMCLSGIDAIALADQLIRAGEFDVIVAGGQESMSQAPHLLPKSREGYKYGDATLVDHLAYDGLHDVFTDQPMGALTEQRNDVDKFTRAEQDEYAAQSHQKAAAAWKDGVFADEVVPVSIPQRKGDPIEFAEDEGIRANTTAESLAGLKPAFRKDGTITAGSASQISDGAAAVIVMNKAKAEELGLTWLAEIGAHGVVAGPDSTLQSQPANAIKKAITREGITVDQLDVIEINEAFAAVALASTKELGVDPAKVNVNGGAIAIGHPIGMSGARIALHAALELARRGSGYAVAALCGAGGQGDALVLRR</sequence>